<accession>B5F7F0</accession>
<organism>
    <name type="scientific">Salmonella agona (strain SL483)</name>
    <dbReference type="NCBI Taxonomy" id="454166"/>
    <lineage>
        <taxon>Bacteria</taxon>
        <taxon>Pseudomonadati</taxon>
        <taxon>Pseudomonadota</taxon>
        <taxon>Gammaproteobacteria</taxon>
        <taxon>Enterobacterales</taxon>
        <taxon>Enterobacteriaceae</taxon>
        <taxon>Salmonella</taxon>
    </lineage>
</organism>
<reference key="1">
    <citation type="journal article" date="2011" name="J. Bacteriol.">
        <title>Comparative genomics of 28 Salmonella enterica isolates: evidence for CRISPR-mediated adaptive sublineage evolution.</title>
        <authorList>
            <person name="Fricke W.F."/>
            <person name="Mammel M.K."/>
            <person name="McDermott P.F."/>
            <person name="Tartera C."/>
            <person name="White D.G."/>
            <person name="Leclerc J.E."/>
            <person name="Ravel J."/>
            <person name="Cebula T.A."/>
        </authorList>
    </citation>
    <scope>NUCLEOTIDE SEQUENCE [LARGE SCALE GENOMIC DNA]</scope>
    <source>
        <strain>SL483</strain>
    </source>
</reference>
<sequence length="480" mass="54797">MTLSFTARWRDELPATYTALLPTPLKNARLIWYNDELAQQLAIPASLFDATNGAGVWGGETLLPGMSPVAQVYSGHQFGVWAGQLGDGRGILLGEQLLADGSTLDWHLKGAGLTPYSRMGDGRAVLRSTIRESLASEAMHYLGIPTTRALSIVASDTPVQRETQETGAMLMRLAQSHMRFGHFEHFYYRREPEKVQQLADFAIHHYWPQWQDVPEKYALWFEEVAARTGRLIAEWQTVGFSHGVMNTDNMSILGLTIDYGPFGFLDDYDPGFIGNHSDHQGRYRFDNQPSVALWNLQRLAQTLTPFIEIDALNRALDRYQDALLTHYGQRMRQKLGFFTEQKDDNALLNELFSLMAREGSDYTRTFRMLSHTEQQSASSPLRDTFIDRAAFDAWFDRYRARLRTEAVDDALRQQQMQRVNPAVVLRNWLAQRAIDAAEQGDMAELHRLHEVLRQPFTDRDDDYASRPPEWGKRLEVSCSS</sequence>
<evidence type="ECO:0000255" key="1">
    <source>
        <dbReference type="HAMAP-Rule" id="MF_00692"/>
    </source>
</evidence>
<feature type="chain" id="PRO_1000132122" description="Protein nucleotidyltransferase YdiU">
    <location>
        <begin position="1"/>
        <end position="480"/>
    </location>
</feature>
<feature type="active site" description="Proton acceptor" evidence="1">
    <location>
        <position position="248"/>
    </location>
</feature>
<feature type="binding site" evidence="1">
    <location>
        <position position="86"/>
    </location>
    <ligand>
        <name>ATP</name>
        <dbReference type="ChEBI" id="CHEBI:30616"/>
    </ligand>
</feature>
<feature type="binding site" evidence="1">
    <location>
        <position position="88"/>
    </location>
    <ligand>
        <name>ATP</name>
        <dbReference type="ChEBI" id="CHEBI:30616"/>
    </ligand>
</feature>
<feature type="binding site" evidence="1">
    <location>
        <position position="89"/>
    </location>
    <ligand>
        <name>ATP</name>
        <dbReference type="ChEBI" id="CHEBI:30616"/>
    </ligand>
</feature>
<feature type="binding site" evidence="1">
    <location>
        <position position="109"/>
    </location>
    <ligand>
        <name>ATP</name>
        <dbReference type="ChEBI" id="CHEBI:30616"/>
    </ligand>
</feature>
<feature type="binding site" evidence="1">
    <location>
        <position position="121"/>
    </location>
    <ligand>
        <name>ATP</name>
        <dbReference type="ChEBI" id="CHEBI:30616"/>
    </ligand>
</feature>
<feature type="binding site" evidence="1">
    <location>
        <position position="122"/>
    </location>
    <ligand>
        <name>ATP</name>
        <dbReference type="ChEBI" id="CHEBI:30616"/>
    </ligand>
</feature>
<feature type="binding site" evidence="1">
    <location>
        <position position="172"/>
    </location>
    <ligand>
        <name>ATP</name>
        <dbReference type="ChEBI" id="CHEBI:30616"/>
    </ligand>
</feature>
<feature type="binding site" evidence="1">
    <location>
        <position position="179"/>
    </location>
    <ligand>
        <name>ATP</name>
        <dbReference type="ChEBI" id="CHEBI:30616"/>
    </ligand>
</feature>
<feature type="binding site" evidence="1">
    <location>
        <position position="249"/>
    </location>
    <ligand>
        <name>Mg(2+)</name>
        <dbReference type="ChEBI" id="CHEBI:18420"/>
    </ligand>
</feature>
<feature type="binding site" evidence="1">
    <location>
        <position position="258"/>
    </location>
    <ligand>
        <name>ATP</name>
        <dbReference type="ChEBI" id="CHEBI:30616"/>
    </ligand>
</feature>
<feature type="binding site" evidence="1">
    <location>
        <position position="258"/>
    </location>
    <ligand>
        <name>Mg(2+)</name>
        <dbReference type="ChEBI" id="CHEBI:18420"/>
    </ligand>
</feature>
<name>SELO_SALA4</name>
<dbReference type="EC" id="2.7.7.-" evidence="1"/>
<dbReference type="EC" id="2.7.7.108" evidence="1"/>
<dbReference type="EMBL" id="CP001138">
    <property type="protein sequence ID" value="ACH52090.1"/>
    <property type="molecule type" value="Genomic_DNA"/>
</dbReference>
<dbReference type="RefSeq" id="WP_000175661.1">
    <property type="nucleotide sequence ID" value="NC_011149.1"/>
</dbReference>
<dbReference type="SMR" id="B5F7F0"/>
<dbReference type="KEGG" id="sea:SeAg_B1828"/>
<dbReference type="HOGENOM" id="CLU_010245_4_0_6"/>
<dbReference type="Proteomes" id="UP000008819">
    <property type="component" value="Chromosome"/>
</dbReference>
<dbReference type="GO" id="GO:0070733">
    <property type="term" value="F:AMPylase activity"/>
    <property type="evidence" value="ECO:0007669"/>
    <property type="project" value="TreeGrafter"/>
</dbReference>
<dbReference type="GO" id="GO:0005524">
    <property type="term" value="F:ATP binding"/>
    <property type="evidence" value="ECO:0007669"/>
    <property type="project" value="UniProtKB-UniRule"/>
</dbReference>
<dbReference type="GO" id="GO:0000287">
    <property type="term" value="F:magnesium ion binding"/>
    <property type="evidence" value="ECO:0007669"/>
    <property type="project" value="UniProtKB-UniRule"/>
</dbReference>
<dbReference type="HAMAP" id="MF_00692">
    <property type="entry name" value="YdiU_SelO"/>
    <property type="match status" value="1"/>
</dbReference>
<dbReference type="InterPro" id="IPR054838">
    <property type="entry name" value="adnlytase_SelO"/>
</dbReference>
<dbReference type="InterPro" id="IPR003846">
    <property type="entry name" value="SelO"/>
</dbReference>
<dbReference type="NCBIfam" id="NF040880">
    <property type="entry name" value="adnlytase_SelO"/>
    <property type="match status" value="1"/>
</dbReference>
<dbReference type="NCBIfam" id="NF000658">
    <property type="entry name" value="PRK00029.1"/>
    <property type="match status" value="1"/>
</dbReference>
<dbReference type="PANTHER" id="PTHR32057">
    <property type="entry name" value="PROTEIN ADENYLYLTRANSFERASE SELO, MITOCHONDRIAL"/>
    <property type="match status" value="1"/>
</dbReference>
<dbReference type="PANTHER" id="PTHR32057:SF14">
    <property type="entry name" value="PROTEIN ADENYLYLTRANSFERASE SELO, MITOCHONDRIAL"/>
    <property type="match status" value="1"/>
</dbReference>
<dbReference type="Pfam" id="PF02696">
    <property type="entry name" value="SelO"/>
    <property type="match status" value="1"/>
</dbReference>
<gene>
    <name evidence="1" type="primary">ydiU</name>
    <name evidence="1" type="synonym">selO</name>
    <name type="ordered locus">SeAg_B1828</name>
</gene>
<protein>
    <recommendedName>
        <fullName evidence="1">Protein nucleotidyltransferase YdiU</fullName>
        <ecNumber evidence="1">2.7.7.-</ecNumber>
    </recommendedName>
    <alternativeName>
        <fullName evidence="1">Protein adenylyltransferase YdiU</fullName>
        <ecNumber evidence="1">2.7.7.108</ecNumber>
    </alternativeName>
    <alternativeName>
        <fullName evidence="1">Protein uridylyltransferase YdiU</fullName>
        <ecNumber evidence="1">2.7.7.-</ecNumber>
    </alternativeName>
</protein>
<comment type="function">
    <text evidence="1">Nucleotidyltransferase involved in the post-translational modification of proteins. It can catalyze the addition of adenosine monophosphate (AMP) or uridine monophosphate (UMP) to a protein, resulting in modifications known as AMPylation and UMPylation.</text>
</comment>
<comment type="catalytic activity">
    <reaction evidence="1">
        <text>L-seryl-[protein] + ATP = 3-O-(5'-adenylyl)-L-seryl-[protein] + diphosphate</text>
        <dbReference type="Rhea" id="RHEA:58120"/>
        <dbReference type="Rhea" id="RHEA-COMP:9863"/>
        <dbReference type="Rhea" id="RHEA-COMP:15073"/>
        <dbReference type="ChEBI" id="CHEBI:29999"/>
        <dbReference type="ChEBI" id="CHEBI:30616"/>
        <dbReference type="ChEBI" id="CHEBI:33019"/>
        <dbReference type="ChEBI" id="CHEBI:142516"/>
        <dbReference type="EC" id="2.7.7.108"/>
    </reaction>
</comment>
<comment type="catalytic activity">
    <reaction evidence="1">
        <text>L-threonyl-[protein] + ATP = 3-O-(5'-adenylyl)-L-threonyl-[protein] + diphosphate</text>
        <dbReference type="Rhea" id="RHEA:54292"/>
        <dbReference type="Rhea" id="RHEA-COMP:11060"/>
        <dbReference type="Rhea" id="RHEA-COMP:13847"/>
        <dbReference type="ChEBI" id="CHEBI:30013"/>
        <dbReference type="ChEBI" id="CHEBI:30616"/>
        <dbReference type="ChEBI" id="CHEBI:33019"/>
        <dbReference type="ChEBI" id="CHEBI:138113"/>
        <dbReference type="EC" id="2.7.7.108"/>
    </reaction>
</comment>
<comment type="catalytic activity">
    <reaction evidence="1">
        <text>L-tyrosyl-[protein] + ATP = O-(5'-adenylyl)-L-tyrosyl-[protein] + diphosphate</text>
        <dbReference type="Rhea" id="RHEA:54288"/>
        <dbReference type="Rhea" id="RHEA-COMP:10136"/>
        <dbReference type="Rhea" id="RHEA-COMP:13846"/>
        <dbReference type="ChEBI" id="CHEBI:30616"/>
        <dbReference type="ChEBI" id="CHEBI:33019"/>
        <dbReference type="ChEBI" id="CHEBI:46858"/>
        <dbReference type="ChEBI" id="CHEBI:83624"/>
        <dbReference type="EC" id="2.7.7.108"/>
    </reaction>
</comment>
<comment type="catalytic activity">
    <reaction evidence="1">
        <text>L-histidyl-[protein] + UTP = N(tele)-(5'-uridylyl)-L-histidyl-[protein] + diphosphate</text>
        <dbReference type="Rhea" id="RHEA:83891"/>
        <dbReference type="Rhea" id="RHEA-COMP:9745"/>
        <dbReference type="Rhea" id="RHEA-COMP:20239"/>
        <dbReference type="ChEBI" id="CHEBI:29979"/>
        <dbReference type="ChEBI" id="CHEBI:33019"/>
        <dbReference type="ChEBI" id="CHEBI:46398"/>
        <dbReference type="ChEBI" id="CHEBI:233474"/>
    </reaction>
</comment>
<comment type="catalytic activity">
    <reaction evidence="1">
        <text>L-seryl-[protein] + UTP = O-(5'-uridylyl)-L-seryl-[protein] + diphosphate</text>
        <dbReference type="Rhea" id="RHEA:64604"/>
        <dbReference type="Rhea" id="RHEA-COMP:9863"/>
        <dbReference type="Rhea" id="RHEA-COMP:16635"/>
        <dbReference type="ChEBI" id="CHEBI:29999"/>
        <dbReference type="ChEBI" id="CHEBI:33019"/>
        <dbReference type="ChEBI" id="CHEBI:46398"/>
        <dbReference type="ChEBI" id="CHEBI:156051"/>
    </reaction>
</comment>
<comment type="catalytic activity">
    <reaction evidence="1">
        <text>L-tyrosyl-[protein] + UTP = O-(5'-uridylyl)-L-tyrosyl-[protein] + diphosphate</text>
        <dbReference type="Rhea" id="RHEA:83887"/>
        <dbReference type="Rhea" id="RHEA-COMP:10136"/>
        <dbReference type="Rhea" id="RHEA-COMP:20238"/>
        <dbReference type="ChEBI" id="CHEBI:33019"/>
        <dbReference type="ChEBI" id="CHEBI:46398"/>
        <dbReference type="ChEBI" id="CHEBI:46858"/>
        <dbReference type="ChEBI" id="CHEBI:90602"/>
    </reaction>
</comment>
<comment type="cofactor">
    <cofactor evidence="1">
        <name>Mg(2+)</name>
        <dbReference type="ChEBI" id="CHEBI:18420"/>
    </cofactor>
    <cofactor evidence="1">
        <name>Mn(2+)</name>
        <dbReference type="ChEBI" id="CHEBI:29035"/>
    </cofactor>
</comment>
<comment type="similarity">
    <text evidence="1">Belongs to the SELO family.</text>
</comment>
<proteinExistence type="inferred from homology"/>
<keyword id="KW-0067">ATP-binding</keyword>
<keyword id="KW-0460">Magnesium</keyword>
<keyword id="KW-0464">Manganese</keyword>
<keyword id="KW-0479">Metal-binding</keyword>
<keyword id="KW-0547">Nucleotide-binding</keyword>
<keyword id="KW-0548">Nucleotidyltransferase</keyword>
<keyword id="KW-0808">Transferase</keyword>